<dbReference type="EMBL" id="AF276080">
    <property type="protein sequence ID" value="AAG10010.1"/>
    <property type="molecule type" value="Genomic_DNA"/>
</dbReference>
<dbReference type="GO" id="GO:0005576">
    <property type="term" value="C:extracellular region"/>
    <property type="evidence" value="ECO:0007669"/>
    <property type="project" value="UniProtKB-SubCell"/>
</dbReference>
<dbReference type="GO" id="GO:0042742">
    <property type="term" value="P:defense response to bacterium"/>
    <property type="evidence" value="ECO:0007669"/>
    <property type="project" value="UniProtKB-KW"/>
</dbReference>
<dbReference type="GO" id="GO:0031640">
    <property type="term" value="P:killing of cells of another organism"/>
    <property type="evidence" value="ECO:0007669"/>
    <property type="project" value="UniProtKB-KW"/>
</dbReference>
<dbReference type="InterPro" id="IPR006311">
    <property type="entry name" value="TAT_signal"/>
</dbReference>
<dbReference type="PROSITE" id="PS51318">
    <property type="entry name" value="TAT"/>
    <property type="match status" value="1"/>
</dbReference>
<feature type="propeptide" id="PRO_0000013170" evidence="1">
    <location>
        <begin position="1"/>
        <end position="230"/>
    </location>
</feature>
<feature type="peptide" id="PRO_0000013171" description="Halocin-S8">
    <location>
        <begin position="231"/>
        <end position="266"/>
    </location>
</feature>
<feature type="propeptide" id="PRO_0000013172">
    <location>
        <begin position="267"/>
        <end position="311"/>
    </location>
</feature>
<name>HAS8_HALS8</name>
<gene>
    <name type="primary">halS8</name>
</gene>
<accession>Q9HHA8</accession>
<protein>
    <recommendedName>
        <fullName>Halocin-S8</fullName>
    </recommendedName>
</protein>
<keyword id="KW-0044">Antibiotic</keyword>
<keyword id="KW-0929">Antimicrobial</keyword>
<keyword id="KW-0078">Bacteriocin</keyword>
<keyword id="KW-0903">Direct protein sequencing</keyword>
<keyword id="KW-0614">Plasmid</keyword>
<keyword id="KW-0964">Secreted</keyword>
<proteinExistence type="evidence at protein level"/>
<comment type="function">
    <text>Has antibacterial activity against the haloarchaeons H.salinarium NRC817, Halobacterium GRB and H.gibbonsii.</text>
</comment>
<comment type="subcellular location">
    <subcellularLocation>
        <location>Secreted</location>
    </subcellularLocation>
</comment>
<comment type="miscellaneous">
    <text>Halocin-S8 is quite robust, as it can be desalted, boiled, subjected to organic solvents, and stored at 4 degrees Celsius for extended periods without losing activity.</text>
</comment>
<organism>
    <name type="scientific">Haloarchaeon S8a</name>
    <dbReference type="NCBI Taxonomy" id="135836"/>
    <lineage>
        <taxon>Archaea</taxon>
        <taxon>Methanobacteriati</taxon>
        <taxon>Methanobacteriota</taxon>
        <taxon>Stenosarchaea group</taxon>
        <taxon>Halobacteria</taxon>
        <taxon>Halobacteriales</taxon>
        <taxon>Halobacteriaceae</taxon>
    </lineage>
</organism>
<sequence>MSDKDSINRRNVLRKIGGIGVASAVGFSGLASGESLSDDEKQDVIDTIYKSQRVEQIKKKFGGVNIEPKKVQSVTTNQSGDLVTAKLSVSDGDLVYSSVKDTTVIVQFDRSASEIGESWPKNTEAFIKSTSSGVDLLRTATDEEIKDVTEGVNTSEIESADAVNIFIDPESQTYYMEKYDFNNKVLEMFELATGGTSSGKISPTREDQNHEYNVREHKVFNSEKQNIQLQSDCNINSNTAADVILCFNQVGSCALCSPTLVGGPVPTVACLLVVCFGTPNAVSAILEEVDNSCFNLIKDVISCWDEWTSFW</sequence>
<evidence type="ECO:0000269" key="1">
    <source>
    </source>
</evidence>
<reference key="1">
    <citation type="journal article" date="2000" name="J. Bacteriol.">
        <title>Halocin S8: a 36-amino-acid microhalocin from the haloarchaeal strain S8a.</title>
        <authorList>
            <person name="Price L.B."/>
            <person name="Shand R.F."/>
        </authorList>
    </citation>
    <scope>NUCLEOTIDE SEQUENCE [GENOMIC DNA]</scope>
    <scope>PROTEIN SEQUENCE OF 231-266</scope>
</reference>
<geneLocation type="plasmid"/>